<keyword id="KW-0067">ATP-binding</keyword>
<keyword id="KW-0963">Cytoplasm</keyword>
<keyword id="KW-0418">Kinase</keyword>
<keyword id="KW-0547">Nucleotide-binding</keyword>
<keyword id="KW-1185">Reference proteome</keyword>
<keyword id="KW-0808">Transferase</keyword>
<accession>A5VKU8</accession>
<proteinExistence type="inferred from homology"/>
<feature type="chain" id="PRO_1000061100" description="Uridine kinase">
    <location>
        <begin position="1"/>
        <end position="218"/>
    </location>
</feature>
<feature type="binding site" evidence="1">
    <location>
        <begin position="16"/>
        <end position="23"/>
    </location>
    <ligand>
        <name>ATP</name>
        <dbReference type="ChEBI" id="CHEBI:30616"/>
    </ligand>
</feature>
<dbReference type="EC" id="2.7.1.48" evidence="1"/>
<dbReference type="EMBL" id="CP000705">
    <property type="protein sequence ID" value="ABQ83472.1"/>
    <property type="molecule type" value="Genomic_DNA"/>
</dbReference>
<dbReference type="RefSeq" id="WP_003668449.1">
    <property type="nucleotide sequence ID" value="NZ_AZDD01000001.1"/>
</dbReference>
<dbReference type="SMR" id="A5VKU8"/>
<dbReference type="STRING" id="557436.Lreu_1215"/>
<dbReference type="KEGG" id="lre:Lreu_1215"/>
<dbReference type="PATRIC" id="fig|557436.17.peg.83"/>
<dbReference type="eggNOG" id="COG0572">
    <property type="taxonomic scope" value="Bacteria"/>
</dbReference>
<dbReference type="HOGENOM" id="CLU_021278_1_2_9"/>
<dbReference type="UniPathway" id="UPA00574">
    <property type="reaction ID" value="UER00637"/>
</dbReference>
<dbReference type="UniPathway" id="UPA00579">
    <property type="reaction ID" value="UER00640"/>
</dbReference>
<dbReference type="Proteomes" id="UP000001991">
    <property type="component" value="Chromosome"/>
</dbReference>
<dbReference type="GO" id="GO:0005737">
    <property type="term" value="C:cytoplasm"/>
    <property type="evidence" value="ECO:0007669"/>
    <property type="project" value="UniProtKB-SubCell"/>
</dbReference>
<dbReference type="GO" id="GO:0005524">
    <property type="term" value="F:ATP binding"/>
    <property type="evidence" value="ECO:0007669"/>
    <property type="project" value="UniProtKB-UniRule"/>
</dbReference>
<dbReference type="GO" id="GO:0043771">
    <property type="term" value="F:cytidine kinase activity"/>
    <property type="evidence" value="ECO:0007669"/>
    <property type="project" value="RHEA"/>
</dbReference>
<dbReference type="GO" id="GO:0004849">
    <property type="term" value="F:uridine kinase activity"/>
    <property type="evidence" value="ECO:0007669"/>
    <property type="project" value="UniProtKB-UniRule"/>
</dbReference>
<dbReference type="GO" id="GO:0044211">
    <property type="term" value="P:CTP salvage"/>
    <property type="evidence" value="ECO:0007669"/>
    <property type="project" value="UniProtKB-UniRule"/>
</dbReference>
<dbReference type="GO" id="GO:0044206">
    <property type="term" value="P:UMP salvage"/>
    <property type="evidence" value="ECO:0007669"/>
    <property type="project" value="UniProtKB-UniRule"/>
</dbReference>
<dbReference type="CDD" id="cd02023">
    <property type="entry name" value="UMPK"/>
    <property type="match status" value="1"/>
</dbReference>
<dbReference type="FunFam" id="3.40.50.300:FF:000339">
    <property type="entry name" value="Uridine kinase"/>
    <property type="match status" value="1"/>
</dbReference>
<dbReference type="Gene3D" id="3.40.50.300">
    <property type="entry name" value="P-loop containing nucleotide triphosphate hydrolases"/>
    <property type="match status" value="1"/>
</dbReference>
<dbReference type="HAMAP" id="MF_00551">
    <property type="entry name" value="Uridine_kinase"/>
    <property type="match status" value="1"/>
</dbReference>
<dbReference type="InterPro" id="IPR027417">
    <property type="entry name" value="P-loop_NTPase"/>
</dbReference>
<dbReference type="InterPro" id="IPR006083">
    <property type="entry name" value="PRK/URK"/>
</dbReference>
<dbReference type="InterPro" id="IPR026008">
    <property type="entry name" value="Uridine_kinase"/>
</dbReference>
<dbReference type="InterPro" id="IPR000764">
    <property type="entry name" value="Uridine_kinase-like"/>
</dbReference>
<dbReference type="NCBIfam" id="NF004018">
    <property type="entry name" value="PRK05480.1"/>
    <property type="match status" value="1"/>
</dbReference>
<dbReference type="NCBIfam" id="TIGR00235">
    <property type="entry name" value="udk"/>
    <property type="match status" value="1"/>
</dbReference>
<dbReference type="PANTHER" id="PTHR10285">
    <property type="entry name" value="URIDINE KINASE"/>
    <property type="match status" value="1"/>
</dbReference>
<dbReference type="Pfam" id="PF00485">
    <property type="entry name" value="PRK"/>
    <property type="match status" value="1"/>
</dbReference>
<dbReference type="PRINTS" id="PR00988">
    <property type="entry name" value="URIDINKINASE"/>
</dbReference>
<dbReference type="SUPFAM" id="SSF52540">
    <property type="entry name" value="P-loop containing nucleoside triphosphate hydrolases"/>
    <property type="match status" value="1"/>
</dbReference>
<name>URK_LIMRD</name>
<protein>
    <recommendedName>
        <fullName evidence="1">Uridine kinase</fullName>
        <ecNumber evidence="1">2.7.1.48</ecNumber>
    </recommendedName>
    <alternativeName>
        <fullName evidence="1">Cytidine monophosphokinase</fullName>
    </alternativeName>
    <alternativeName>
        <fullName evidence="1">Uridine monophosphokinase</fullName>
    </alternativeName>
</protein>
<reference key="1">
    <citation type="journal article" date="2011" name="PLoS Genet.">
        <title>The evolution of host specialization in the vertebrate gut symbiont Lactobacillus reuteri.</title>
        <authorList>
            <person name="Frese S.A."/>
            <person name="Benson A.K."/>
            <person name="Tannock G.W."/>
            <person name="Loach D.M."/>
            <person name="Kim J."/>
            <person name="Zhang M."/>
            <person name="Oh P.L."/>
            <person name="Heng N.C."/>
            <person name="Patil P.B."/>
            <person name="Juge N."/>
            <person name="Mackenzie D.A."/>
            <person name="Pearson B.M."/>
            <person name="Lapidus A."/>
            <person name="Dalin E."/>
            <person name="Tice H."/>
            <person name="Goltsman E."/>
            <person name="Land M."/>
            <person name="Hauser L."/>
            <person name="Ivanova N."/>
            <person name="Kyrpides N.C."/>
            <person name="Walter J."/>
        </authorList>
    </citation>
    <scope>NUCLEOTIDE SEQUENCE [LARGE SCALE GENOMIC DNA]</scope>
    <source>
        <strain>DSM 20016</strain>
    </source>
</reference>
<gene>
    <name evidence="1" type="primary">udk</name>
    <name type="ordered locus">Lreu_1215</name>
</gene>
<evidence type="ECO:0000255" key="1">
    <source>
        <dbReference type="HAMAP-Rule" id="MF_00551"/>
    </source>
</evidence>
<comment type="catalytic activity">
    <reaction evidence="1">
        <text>uridine + ATP = UMP + ADP + H(+)</text>
        <dbReference type="Rhea" id="RHEA:16825"/>
        <dbReference type="ChEBI" id="CHEBI:15378"/>
        <dbReference type="ChEBI" id="CHEBI:16704"/>
        <dbReference type="ChEBI" id="CHEBI:30616"/>
        <dbReference type="ChEBI" id="CHEBI:57865"/>
        <dbReference type="ChEBI" id="CHEBI:456216"/>
        <dbReference type="EC" id="2.7.1.48"/>
    </reaction>
</comment>
<comment type="catalytic activity">
    <reaction evidence="1">
        <text>cytidine + ATP = CMP + ADP + H(+)</text>
        <dbReference type="Rhea" id="RHEA:24674"/>
        <dbReference type="ChEBI" id="CHEBI:15378"/>
        <dbReference type="ChEBI" id="CHEBI:17562"/>
        <dbReference type="ChEBI" id="CHEBI:30616"/>
        <dbReference type="ChEBI" id="CHEBI:60377"/>
        <dbReference type="ChEBI" id="CHEBI:456216"/>
        <dbReference type="EC" id="2.7.1.48"/>
    </reaction>
</comment>
<comment type="pathway">
    <text evidence="1">Pyrimidine metabolism; CTP biosynthesis via salvage pathway; CTP from cytidine: step 1/3.</text>
</comment>
<comment type="pathway">
    <text evidence="1">Pyrimidine metabolism; UMP biosynthesis via salvage pathway; UMP from uridine: step 1/1.</text>
</comment>
<comment type="subcellular location">
    <subcellularLocation>
        <location evidence="1">Cytoplasm</location>
    </subcellularLocation>
</comment>
<comment type="similarity">
    <text evidence="1">Belongs to the uridine kinase family.</text>
</comment>
<organism>
    <name type="scientific">Limosilactobacillus reuteri (strain DSM 20016)</name>
    <name type="common">Lactobacillus reuteri</name>
    <dbReference type="NCBI Taxonomy" id="557436"/>
    <lineage>
        <taxon>Bacteria</taxon>
        <taxon>Bacillati</taxon>
        <taxon>Bacillota</taxon>
        <taxon>Bacilli</taxon>
        <taxon>Lactobacillales</taxon>
        <taxon>Lactobacillaceae</taxon>
        <taxon>Limosilactobacillus</taxon>
    </lineage>
</organism>
<sequence length="218" mass="25135">MSIQQNKRPVVIGVTGGSGSGKTTVSNKIYDQLHGQAIQIINQDTYYNDQSDMTMDERKAVNYDHPLAFDTDFLIKQLTDLRSNKAIEMPVYDYTQYTRSDKTVHVEPTDVIILEGILILDDERLRDLMDIKVYVDTDDDIRIIRRIQRDMVERGRSLDSIITQYLATVKPMYHQFVEPTKRYADIIVPEGGENQVAIDLLSTKIRDILVKRGHTELR</sequence>